<evidence type="ECO:0000250" key="1"/>
<evidence type="ECO:0000255" key="2">
    <source>
        <dbReference type="HAMAP-Rule" id="MF_00057"/>
    </source>
</evidence>
<reference key="1">
    <citation type="journal article" date="2001" name="Nature">
        <title>Complete genome sequence of a multiple drug resistant Salmonella enterica serovar Typhi CT18.</title>
        <authorList>
            <person name="Parkhill J."/>
            <person name="Dougan G."/>
            <person name="James K.D."/>
            <person name="Thomson N.R."/>
            <person name="Pickard D."/>
            <person name="Wain J."/>
            <person name="Churcher C.M."/>
            <person name="Mungall K.L."/>
            <person name="Bentley S.D."/>
            <person name="Holden M.T.G."/>
            <person name="Sebaihia M."/>
            <person name="Baker S."/>
            <person name="Basham D."/>
            <person name="Brooks K."/>
            <person name="Chillingworth T."/>
            <person name="Connerton P."/>
            <person name="Cronin A."/>
            <person name="Davis P."/>
            <person name="Davies R.M."/>
            <person name="Dowd L."/>
            <person name="White N."/>
            <person name="Farrar J."/>
            <person name="Feltwell T."/>
            <person name="Hamlin N."/>
            <person name="Haque A."/>
            <person name="Hien T.T."/>
            <person name="Holroyd S."/>
            <person name="Jagels K."/>
            <person name="Krogh A."/>
            <person name="Larsen T.S."/>
            <person name="Leather S."/>
            <person name="Moule S."/>
            <person name="O'Gaora P."/>
            <person name="Parry C."/>
            <person name="Quail M.A."/>
            <person name="Rutherford K.M."/>
            <person name="Simmonds M."/>
            <person name="Skelton J."/>
            <person name="Stevens K."/>
            <person name="Whitehead S."/>
            <person name="Barrell B.G."/>
        </authorList>
    </citation>
    <scope>NUCLEOTIDE SEQUENCE [LARGE SCALE GENOMIC DNA]</scope>
    <source>
        <strain>CT18</strain>
    </source>
</reference>
<reference key="2">
    <citation type="journal article" date="2003" name="J. Bacteriol.">
        <title>Comparative genomics of Salmonella enterica serovar Typhi strains Ty2 and CT18.</title>
        <authorList>
            <person name="Deng W."/>
            <person name="Liou S.-R."/>
            <person name="Plunkett G. III"/>
            <person name="Mayhew G.F."/>
            <person name="Rose D.J."/>
            <person name="Burland V."/>
            <person name="Kodoyianni V."/>
            <person name="Schwartz D.C."/>
            <person name="Blattner F.R."/>
        </authorList>
    </citation>
    <scope>NUCLEOTIDE SEQUENCE [LARGE SCALE GENOMIC DNA]</scope>
    <source>
        <strain>ATCC 700931 / Ty2</strain>
    </source>
</reference>
<dbReference type="EC" id="2.7.7.38" evidence="2"/>
<dbReference type="EMBL" id="AL513382">
    <property type="protein sequence ID" value="CAD05388.1"/>
    <property type="molecule type" value="Genomic_DNA"/>
</dbReference>
<dbReference type="EMBL" id="AE014613">
    <property type="protein sequence ID" value="AAO69561.1"/>
    <property type="molecule type" value="Genomic_DNA"/>
</dbReference>
<dbReference type="RefSeq" id="NP_455474.1">
    <property type="nucleotide sequence ID" value="NC_003198.1"/>
</dbReference>
<dbReference type="RefSeq" id="WP_000011583.1">
    <property type="nucleotide sequence ID" value="NZ_WSUR01000013.1"/>
</dbReference>
<dbReference type="SMR" id="Q8Z800"/>
<dbReference type="STRING" id="220341.gene:17584979"/>
<dbReference type="KEGG" id="stt:t1946"/>
<dbReference type="KEGG" id="sty:STY0990"/>
<dbReference type="PATRIC" id="fig|220341.7.peg.998"/>
<dbReference type="eggNOG" id="COG1212">
    <property type="taxonomic scope" value="Bacteria"/>
</dbReference>
<dbReference type="HOGENOM" id="CLU_065038_1_0_6"/>
<dbReference type="OMA" id="FMATCAK"/>
<dbReference type="OrthoDB" id="9815559at2"/>
<dbReference type="UniPathway" id="UPA00030"/>
<dbReference type="UniPathway" id="UPA00358">
    <property type="reaction ID" value="UER00476"/>
</dbReference>
<dbReference type="Proteomes" id="UP000000541">
    <property type="component" value="Chromosome"/>
</dbReference>
<dbReference type="Proteomes" id="UP000002670">
    <property type="component" value="Chromosome"/>
</dbReference>
<dbReference type="GO" id="GO:0005829">
    <property type="term" value="C:cytosol"/>
    <property type="evidence" value="ECO:0007669"/>
    <property type="project" value="TreeGrafter"/>
</dbReference>
<dbReference type="GO" id="GO:0008690">
    <property type="term" value="F:3-deoxy-manno-octulosonate cytidylyltransferase activity"/>
    <property type="evidence" value="ECO:0007669"/>
    <property type="project" value="UniProtKB-UniRule"/>
</dbReference>
<dbReference type="GO" id="GO:0033468">
    <property type="term" value="P:CMP-keto-3-deoxy-D-manno-octulosonic acid biosynthetic process"/>
    <property type="evidence" value="ECO:0007669"/>
    <property type="project" value="UniProtKB-UniRule"/>
</dbReference>
<dbReference type="GO" id="GO:0009103">
    <property type="term" value="P:lipopolysaccharide biosynthetic process"/>
    <property type="evidence" value="ECO:0007669"/>
    <property type="project" value="UniProtKB-UniRule"/>
</dbReference>
<dbReference type="CDD" id="cd02517">
    <property type="entry name" value="CMP-KDO-Synthetase"/>
    <property type="match status" value="1"/>
</dbReference>
<dbReference type="FunFam" id="3.90.550.10:FF:000011">
    <property type="entry name" value="3-deoxy-manno-octulosonate cytidylyltransferase"/>
    <property type="match status" value="1"/>
</dbReference>
<dbReference type="Gene3D" id="3.90.550.10">
    <property type="entry name" value="Spore Coat Polysaccharide Biosynthesis Protein SpsA, Chain A"/>
    <property type="match status" value="1"/>
</dbReference>
<dbReference type="HAMAP" id="MF_00057">
    <property type="entry name" value="KdsB"/>
    <property type="match status" value="1"/>
</dbReference>
<dbReference type="InterPro" id="IPR003329">
    <property type="entry name" value="Cytidylyl_trans"/>
</dbReference>
<dbReference type="InterPro" id="IPR004528">
    <property type="entry name" value="KdsB"/>
</dbReference>
<dbReference type="InterPro" id="IPR029044">
    <property type="entry name" value="Nucleotide-diphossugar_trans"/>
</dbReference>
<dbReference type="NCBIfam" id="TIGR00466">
    <property type="entry name" value="kdsB"/>
    <property type="match status" value="1"/>
</dbReference>
<dbReference type="NCBIfam" id="NF003950">
    <property type="entry name" value="PRK05450.1-3"/>
    <property type="match status" value="1"/>
</dbReference>
<dbReference type="NCBIfam" id="NF003952">
    <property type="entry name" value="PRK05450.1-5"/>
    <property type="match status" value="1"/>
</dbReference>
<dbReference type="NCBIfam" id="NF009905">
    <property type="entry name" value="PRK13368.1"/>
    <property type="match status" value="1"/>
</dbReference>
<dbReference type="PANTHER" id="PTHR42866">
    <property type="entry name" value="3-DEOXY-MANNO-OCTULOSONATE CYTIDYLYLTRANSFERASE"/>
    <property type="match status" value="1"/>
</dbReference>
<dbReference type="PANTHER" id="PTHR42866:SF2">
    <property type="entry name" value="3-DEOXY-MANNO-OCTULOSONATE CYTIDYLYLTRANSFERASE, MITOCHONDRIAL"/>
    <property type="match status" value="1"/>
</dbReference>
<dbReference type="Pfam" id="PF02348">
    <property type="entry name" value="CTP_transf_3"/>
    <property type="match status" value="1"/>
</dbReference>
<dbReference type="SUPFAM" id="SSF53448">
    <property type="entry name" value="Nucleotide-diphospho-sugar transferases"/>
    <property type="match status" value="1"/>
</dbReference>
<gene>
    <name evidence="2" type="primary">kdsB</name>
    <name type="ordered locus">STY0990</name>
    <name type="ordered locus">t1946</name>
</gene>
<proteinExistence type="inferred from homology"/>
<comment type="function">
    <text evidence="2">Activates KDO (a required 8-carbon sugar) for incorporation into bacterial lipopolysaccharide in Gram-negative bacteria.</text>
</comment>
<comment type="catalytic activity">
    <reaction evidence="2">
        <text>3-deoxy-alpha-D-manno-oct-2-ulosonate + CTP = CMP-3-deoxy-beta-D-manno-octulosonate + diphosphate</text>
        <dbReference type="Rhea" id="RHEA:23448"/>
        <dbReference type="ChEBI" id="CHEBI:33019"/>
        <dbReference type="ChEBI" id="CHEBI:37563"/>
        <dbReference type="ChEBI" id="CHEBI:85986"/>
        <dbReference type="ChEBI" id="CHEBI:85987"/>
        <dbReference type="EC" id="2.7.7.38"/>
    </reaction>
</comment>
<comment type="pathway">
    <text evidence="2">Nucleotide-sugar biosynthesis; CMP-3-deoxy-D-manno-octulosonate biosynthesis; CMP-3-deoxy-D-manno-octulosonate from 3-deoxy-D-manno-octulosonate and CTP: step 1/1.</text>
</comment>
<comment type="pathway">
    <text evidence="2">Bacterial outer membrane biogenesis; lipopolysaccharide biosynthesis.</text>
</comment>
<comment type="subcellular location">
    <subcellularLocation>
        <location evidence="2">Cytoplasm</location>
    </subcellularLocation>
</comment>
<comment type="similarity">
    <text evidence="2">Belongs to the KdsB family.</text>
</comment>
<protein>
    <recommendedName>
        <fullName evidence="2">3-deoxy-manno-octulosonate cytidylyltransferase</fullName>
        <ecNumber evidence="2">2.7.7.38</ecNumber>
    </recommendedName>
    <alternativeName>
        <fullName evidence="2">CMP-2-keto-3-deoxyoctulosonic acid synthase</fullName>
        <shortName evidence="2">CKS</shortName>
        <shortName evidence="2">CMP-KDO synthase</shortName>
    </alternativeName>
</protein>
<sequence length="248" mass="27446">MSFVVIIPARFSSTRLPGKPLVDINGKPMIVHVLERARESGAERIIVATDHEDVARAVEAAGGEVCMTRADHQSGTERLAEVVEKCGFTDDTVIVNVQGDEPMIPAVIIRQVAENLAQRQVGMATLAVPIHSAEEAFNPNAVKVVLDAEGYALYFSRATIPWDRDRFAKSLETVGDTCLRHLGIYGYRAGFIRRYVSWQPSPLEHIEMLEQLRVLWYGEKIHVAVAKAVPGTGVDTADDLERVRAEMR</sequence>
<keyword id="KW-0963">Cytoplasm</keyword>
<keyword id="KW-0448">Lipopolysaccharide biosynthesis</keyword>
<keyword id="KW-0548">Nucleotidyltransferase</keyword>
<keyword id="KW-0808">Transferase</keyword>
<name>KDSB_SALTI</name>
<feature type="initiator methionine" description="Removed" evidence="1">
    <location>
        <position position="1"/>
    </location>
</feature>
<feature type="chain" id="PRO_0000188515" description="3-deoxy-manno-octulosonate cytidylyltransferase">
    <location>
        <begin position="2"/>
        <end position="248"/>
    </location>
</feature>
<organism>
    <name type="scientific">Salmonella typhi</name>
    <dbReference type="NCBI Taxonomy" id="90370"/>
    <lineage>
        <taxon>Bacteria</taxon>
        <taxon>Pseudomonadati</taxon>
        <taxon>Pseudomonadota</taxon>
        <taxon>Gammaproteobacteria</taxon>
        <taxon>Enterobacterales</taxon>
        <taxon>Enterobacteriaceae</taxon>
        <taxon>Salmonella</taxon>
    </lineage>
</organism>
<accession>Q8Z800</accession>